<organism>
    <name type="scientific">Prochlorococcus marinus (strain AS9601)</name>
    <dbReference type="NCBI Taxonomy" id="146891"/>
    <lineage>
        <taxon>Bacteria</taxon>
        <taxon>Bacillati</taxon>
        <taxon>Cyanobacteriota</taxon>
        <taxon>Cyanophyceae</taxon>
        <taxon>Synechococcales</taxon>
        <taxon>Prochlorococcaceae</taxon>
        <taxon>Prochlorococcus</taxon>
    </lineage>
</organism>
<protein>
    <recommendedName>
        <fullName evidence="1">Histidine--tRNA ligase</fullName>
        <ecNumber evidence="1">6.1.1.21</ecNumber>
    </recommendedName>
    <alternativeName>
        <fullName evidence="1">Histidyl-tRNA synthetase</fullName>
        <shortName evidence="1">HisRS</shortName>
    </alternativeName>
</protein>
<evidence type="ECO:0000255" key="1">
    <source>
        <dbReference type="HAMAP-Rule" id="MF_00127"/>
    </source>
</evidence>
<sequence length="426" mass="48497">MNNLKNLRGTVDLFPDQLIKWQNVEKILLEQLSRASIKEIRTPILEMTELFIRGIGEGTDVVSKEMYTFLDRGERSCTLRPEGTASVARALIQNGISSNPIQKLWYMGPMFRYERPQAGRQRQFHQLGVEFIGHDSVRSDVEIIALAWDILRKLGIKELNLEINTLGDTNDRSNFQKSFLKWLETNKDSLDLDSQNRISKNPLRILDSKNIQTKKVLENAPRLFNFLSEKSHNRYLDLKRQLEVLKIPYVENFNLVRGLDYYTHTAFEITSGALGSQATVCGGGRYDDLIKQMGGPNTPAIGFAIGLERLILLAGKELEIPRNTDIYIINKGLVAESLAMDLSRKLRNYDLLVELDLSGASFSKQFKKANKLKSKSIIVIGEDEAVNGEFIIRLFDQSGNGNEEEVISFENDIKLENWINNNLLVK</sequence>
<dbReference type="EC" id="6.1.1.21" evidence="1"/>
<dbReference type="EMBL" id="CP000551">
    <property type="protein sequence ID" value="ABM69965.1"/>
    <property type="molecule type" value="Genomic_DNA"/>
</dbReference>
<dbReference type="RefSeq" id="WP_011818127.1">
    <property type="nucleotide sequence ID" value="NC_008816.1"/>
</dbReference>
<dbReference type="SMR" id="A2BQA4"/>
<dbReference type="STRING" id="146891.A9601_06791"/>
<dbReference type="KEGG" id="pmb:A9601_06791"/>
<dbReference type="eggNOG" id="COG0124">
    <property type="taxonomic scope" value="Bacteria"/>
</dbReference>
<dbReference type="HOGENOM" id="CLU_025113_1_1_3"/>
<dbReference type="OrthoDB" id="9800814at2"/>
<dbReference type="Proteomes" id="UP000002590">
    <property type="component" value="Chromosome"/>
</dbReference>
<dbReference type="GO" id="GO:0005737">
    <property type="term" value="C:cytoplasm"/>
    <property type="evidence" value="ECO:0007669"/>
    <property type="project" value="UniProtKB-SubCell"/>
</dbReference>
<dbReference type="GO" id="GO:0005524">
    <property type="term" value="F:ATP binding"/>
    <property type="evidence" value="ECO:0007669"/>
    <property type="project" value="UniProtKB-UniRule"/>
</dbReference>
<dbReference type="GO" id="GO:0004821">
    <property type="term" value="F:histidine-tRNA ligase activity"/>
    <property type="evidence" value="ECO:0007669"/>
    <property type="project" value="UniProtKB-UniRule"/>
</dbReference>
<dbReference type="GO" id="GO:0006427">
    <property type="term" value="P:histidyl-tRNA aminoacylation"/>
    <property type="evidence" value="ECO:0007669"/>
    <property type="project" value="UniProtKB-UniRule"/>
</dbReference>
<dbReference type="CDD" id="cd00773">
    <property type="entry name" value="HisRS-like_core"/>
    <property type="match status" value="1"/>
</dbReference>
<dbReference type="Gene3D" id="3.40.50.800">
    <property type="entry name" value="Anticodon-binding domain"/>
    <property type="match status" value="1"/>
</dbReference>
<dbReference type="Gene3D" id="3.30.930.10">
    <property type="entry name" value="Bira Bifunctional Protein, Domain 2"/>
    <property type="match status" value="1"/>
</dbReference>
<dbReference type="HAMAP" id="MF_00127">
    <property type="entry name" value="His_tRNA_synth"/>
    <property type="match status" value="1"/>
</dbReference>
<dbReference type="InterPro" id="IPR006195">
    <property type="entry name" value="aa-tRNA-synth_II"/>
</dbReference>
<dbReference type="InterPro" id="IPR045864">
    <property type="entry name" value="aa-tRNA-synth_II/BPL/LPL"/>
</dbReference>
<dbReference type="InterPro" id="IPR004154">
    <property type="entry name" value="Anticodon-bd"/>
</dbReference>
<dbReference type="InterPro" id="IPR036621">
    <property type="entry name" value="Anticodon-bd_dom_sf"/>
</dbReference>
<dbReference type="InterPro" id="IPR015807">
    <property type="entry name" value="His-tRNA-ligase"/>
</dbReference>
<dbReference type="InterPro" id="IPR041715">
    <property type="entry name" value="HisRS-like_core"/>
</dbReference>
<dbReference type="InterPro" id="IPR004516">
    <property type="entry name" value="HisRS/HisZ"/>
</dbReference>
<dbReference type="NCBIfam" id="TIGR00442">
    <property type="entry name" value="hisS"/>
    <property type="match status" value="1"/>
</dbReference>
<dbReference type="PANTHER" id="PTHR43707:SF1">
    <property type="entry name" value="HISTIDINE--TRNA LIGASE, MITOCHONDRIAL-RELATED"/>
    <property type="match status" value="1"/>
</dbReference>
<dbReference type="PANTHER" id="PTHR43707">
    <property type="entry name" value="HISTIDYL-TRNA SYNTHETASE"/>
    <property type="match status" value="1"/>
</dbReference>
<dbReference type="Pfam" id="PF03129">
    <property type="entry name" value="HGTP_anticodon"/>
    <property type="match status" value="1"/>
</dbReference>
<dbReference type="Pfam" id="PF13393">
    <property type="entry name" value="tRNA-synt_His"/>
    <property type="match status" value="1"/>
</dbReference>
<dbReference type="PIRSF" id="PIRSF001549">
    <property type="entry name" value="His-tRNA_synth"/>
    <property type="match status" value="1"/>
</dbReference>
<dbReference type="SUPFAM" id="SSF52954">
    <property type="entry name" value="Class II aaRS ABD-related"/>
    <property type="match status" value="1"/>
</dbReference>
<dbReference type="SUPFAM" id="SSF55681">
    <property type="entry name" value="Class II aaRS and biotin synthetases"/>
    <property type="match status" value="1"/>
</dbReference>
<dbReference type="PROSITE" id="PS50862">
    <property type="entry name" value="AA_TRNA_LIGASE_II"/>
    <property type="match status" value="1"/>
</dbReference>
<keyword id="KW-0030">Aminoacyl-tRNA synthetase</keyword>
<keyword id="KW-0067">ATP-binding</keyword>
<keyword id="KW-0963">Cytoplasm</keyword>
<keyword id="KW-0436">Ligase</keyword>
<keyword id="KW-0547">Nucleotide-binding</keyword>
<keyword id="KW-0648">Protein biosynthesis</keyword>
<gene>
    <name evidence="1" type="primary">hisS</name>
    <name type="ordered locus">A9601_06791</name>
</gene>
<name>SYH_PROMS</name>
<feature type="chain" id="PRO_1000016414" description="Histidine--tRNA ligase">
    <location>
        <begin position="1"/>
        <end position="426"/>
    </location>
</feature>
<proteinExistence type="inferred from homology"/>
<accession>A2BQA4</accession>
<comment type="catalytic activity">
    <reaction evidence="1">
        <text>tRNA(His) + L-histidine + ATP = L-histidyl-tRNA(His) + AMP + diphosphate + H(+)</text>
        <dbReference type="Rhea" id="RHEA:17313"/>
        <dbReference type="Rhea" id="RHEA-COMP:9665"/>
        <dbReference type="Rhea" id="RHEA-COMP:9689"/>
        <dbReference type="ChEBI" id="CHEBI:15378"/>
        <dbReference type="ChEBI" id="CHEBI:30616"/>
        <dbReference type="ChEBI" id="CHEBI:33019"/>
        <dbReference type="ChEBI" id="CHEBI:57595"/>
        <dbReference type="ChEBI" id="CHEBI:78442"/>
        <dbReference type="ChEBI" id="CHEBI:78527"/>
        <dbReference type="ChEBI" id="CHEBI:456215"/>
        <dbReference type="EC" id="6.1.1.21"/>
    </reaction>
</comment>
<comment type="subunit">
    <text evidence="1">Homodimer.</text>
</comment>
<comment type="subcellular location">
    <subcellularLocation>
        <location evidence="1">Cytoplasm</location>
    </subcellularLocation>
</comment>
<comment type="similarity">
    <text evidence="1">Belongs to the class-II aminoacyl-tRNA synthetase family.</text>
</comment>
<reference key="1">
    <citation type="journal article" date="2007" name="PLoS Genet.">
        <title>Patterns and implications of gene gain and loss in the evolution of Prochlorococcus.</title>
        <authorList>
            <person name="Kettler G.C."/>
            <person name="Martiny A.C."/>
            <person name="Huang K."/>
            <person name="Zucker J."/>
            <person name="Coleman M.L."/>
            <person name="Rodrigue S."/>
            <person name="Chen F."/>
            <person name="Lapidus A."/>
            <person name="Ferriera S."/>
            <person name="Johnson J."/>
            <person name="Steglich C."/>
            <person name="Church G.M."/>
            <person name="Richardson P."/>
            <person name="Chisholm S.W."/>
        </authorList>
    </citation>
    <scope>NUCLEOTIDE SEQUENCE [LARGE SCALE GENOMIC DNA]</scope>
    <source>
        <strain>AS9601</strain>
    </source>
</reference>